<comment type="function">
    <text evidence="11 12">Non-reducing polyketide synthase; part of the asc-1 gene cluster that mediates the biosynthesis of both ascochlorin and ascofuranone, a strong inhibitor of cyanide-insensitive alternative oxidases and a promising drug candidate against African trypanosomiasis (PubMed:30952781, PubMed:35418536). The first step in the pathway is performed by the non-reducing polyketide synthase ascC that produces orsellinic acid by condensing acetyl-CoA with 3 malonyl-CoA units (PubMed:30952781, PubMed:35418536). Orsellinic acid is then prenylated by the prenyltransferase ascA to yield ilicicolinic acid B (PubMed:30952781, PubMed:35418536). Ilicicolinic acid B is further reduced to ilicicolin B by the reductase ascB (PubMed:30952781, PubMed:35418536). The halogenase ascD then chlorinates ilicicolin B to produce ilicicolin A which is converted to ilicicolin A epoxide by the cytochrome P450 monooxygenase ascE that catalyzes stereoselective epoxidation of the terminal double bond of the prenyl group (PubMed:30952781, PubMed:35418536). Ilicicolin A epoxide is the last common precursor for the biosynthesis of ascofuranone and ascochlorin (PubMed:30952781, PubMed:35418536). The terpene cyclase ascF produces a monocyclic terpene, and the cyclization reaction is proposed to be initiated by protonation of the terminal epoxide of ilicicolin A epoxide to generate a monocyclic tertiarycation, which is followed by a series of hydride and methyl shifts with abstraction of proton, leading to the formation of the (14S,15R,19R)-trimethylcyclohexanone ring structure of ilicicolin C, which is finally reduced to ascochlorin by the dehydrogenase ascG (PubMed:30952781, PubMed:35418536). On the other hand, ilicicolin A epoxide is hydroxylated by the cytochrome P450 monooxygenase ascH, and the resultant product is cyclized by the terpene cyclase ascI to ascofuranol via protonation-initiated epoxide ring opening, which facilitates the 6-endo-tet cyclization to form the tetrahy-drofuran ring (PubMed:30952781). Finally, ascofuranol is oxidized into ascofuranone by ascJ (PubMed:30952781, PubMed:35418536).</text>
</comment>
<comment type="catalytic activity">
    <reaction evidence="11 12">
        <text>3 malonyl-CoA + acetyl-CoA + 2 H(+) = orsellinate + 3 CO2 + 4 CoA</text>
        <dbReference type="Rhea" id="RHEA:62972"/>
        <dbReference type="ChEBI" id="CHEBI:15378"/>
        <dbReference type="ChEBI" id="CHEBI:16162"/>
        <dbReference type="ChEBI" id="CHEBI:16526"/>
        <dbReference type="ChEBI" id="CHEBI:57287"/>
        <dbReference type="ChEBI" id="CHEBI:57288"/>
        <dbReference type="ChEBI" id="CHEBI:57384"/>
    </reaction>
    <physiologicalReaction direction="left-to-right" evidence="11 12">
        <dbReference type="Rhea" id="RHEA:62973"/>
    </physiologicalReaction>
</comment>
<comment type="pathway">
    <text evidence="11 12">Secondary metabolite biosynthesis; terpenoid biosynthesis.</text>
</comment>
<comment type="induction">
    <text evidence="11">Expression is induced on AF medium.</text>
</comment>
<comment type="domain">
    <text evidence="14">Multidomain protein; including a starter unit:ACP transacylase (SAT) that selects the starter unit; a ketosynthase (KS) that catalyzes repeated decarboxylative condensation to elongate the polyketide backbone; a malonyl-CoA:ACP transacylase (MAT) that selects and transfers the extender unit malonyl-CoA; a product template (PT) domain that controls the immediate cyclization regioselectivity of the reactive polyketide backbone; and an acyl-carrier protein (ACP) that serves as the tether of the growing and completed polyketide via its phosphopantetheinyl arm.</text>
</comment>
<comment type="domain">
    <text evidence="1">The release of the polyketide chain from the non-reducing polyketide synthase is mediated by the thioesterase (TE) domain localized at the C-ter of the protein.</text>
</comment>
<comment type="biotechnology">
    <text evidence="8 9 10">Ascofuranone is a specific inhibitor of trypanosome alternative oxidase (TAO), and quickly kills African trypanosomes in vitro and cures infected mice. As an essential factor for trypanosome survival, TAO is a promising drug target due to the absence of alternative oxidases in the mammalian host.</text>
</comment>
<name>ASCC_ACREG</name>
<protein>
    <recommendedName>
        <fullName evidence="13">Non-reducing polyketide synthase ascC</fullName>
        <ecNumber evidence="11 12">2.3.1.-</ecNumber>
    </recommendedName>
    <alternativeName>
        <fullName evidence="13">Ascofuranone/ascochlorin biosynthesis clusters protein C</fullName>
    </alternativeName>
</protein>
<keyword id="KW-0511">Multifunctional enzyme</keyword>
<keyword id="KW-0596">Phosphopantetheine</keyword>
<keyword id="KW-0597">Phosphoprotein</keyword>
<keyword id="KW-0808">Transferase</keyword>
<feature type="chain" id="PRO_0000448992" description="Non-reducing polyketide synthase ascC">
    <location>
        <begin position="1"/>
        <end position="2115"/>
    </location>
</feature>
<feature type="domain" description="Ketosynthase family 3 (KS3)" evidence="4">
    <location>
        <begin position="381"/>
        <end position="805"/>
    </location>
</feature>
<feature type="domain" description="PKS/mFAS DH" evidence="5">
    <location>
        <begin position="1280"/>
        <end position="1581"/>
    </location>
</feature>
<feature type="domain" description="Carrier" evidence="3">
    <location>
        <begin position="1640"/>
        <end position="1724"/>
    </location>
</feature>
<feature type="region of interest" description="Disordered" evidence="7">
    <location>
        <begin position="1"/>
        <end position="21"/>
    </location>
</feature>
<feature type="region of interest" description="N-terminal acylcarrier protein transacylase domain (SAT)" evidence="2">
    <location>
        <begin position="14"/>
        <end position="260"/>
    </location>
</feature>
<feature type="region of interest" description="Malonyl-CoA:ACP transacylase (MAT) domain" evidence="2">
    <location>
        <begin position="908"/>
        <end position="1210"/>
    </location>
</feature>
<feature type="region of interest" description="N-terminal hotdog fold" evidence="5">
    <location>
        <begin position="1280"/>
        <end position="1406"/>
    </location>
</feature>
<feature type="region of interest" description="Product template (PT) domain" evidence="2">
    <location>
        <begin position="1285"/>
        <end position="1580"/>
    </location>
</feature>
<feature type="region of interest" description="C-terminal hotdog fold" evidence="5">
    <location>
        <begin position="1428"/>
        <end position="1581"/>
    </location>
</feature>
<feature type="region of interest" description="Disordered" evidence="7">
    <location>
        <begin position="1587"/>
        <end position="1624"/>
    </location>
</feature>
<feature type="region of interest" description="Disordered" evidence="7">
    <location>
        <begin position="1734"/>
        <end position="1767"/>
    </location>
</feature>
<feature type="region of interest" description="Thioesterase (TE) domain" evidence="1">
    <location>
        <begin position="1777"/>
        <end position="2107"/>
    </location>
</feature>
<feature type="compositionally biased region" description="Polar residues" evidence="7">
    <location>
        <begin position="1588"/>
        <end position="1600"/>
    </location>
</feature>
<feature type="compositionally biased region" description="Polar residues" evidence="7">
    <location>
        <begin position="1734"/>
        <end position="1748"/>
    </location>
</feature>
<feature type="active site" description="For beta-ketoacyl synthase activity" evidence="4">
    <location>
        <position position="553"/>
    </location>
</feature>
<feature type="active site" description="For beta-ketoacyl synthase activity" evidence="4">
    <location>
        <position position="689"/>
    </location>
</feature>
<feature type="active site" description="For beta-ketoacyl synthase activity" evidence="4">
    <location>
        <position position="728"/>
    </location>
</feature>
<feature type="active site" description="For acyl/malonyl transferase activity" evidence="6">
    <location>
        <position position="995"/>
    </location>
</feature>
<feature type="active site" description="Proton acceptor; for dehydratase activity" evidence="5">
    <location>
        <position position="1315"/>
    </location>
</feature>
<feature type="active site" description="Proton donor; for dehydratase activity" evidence="5">
    <location>
        <position position="1492"/>
    </location>
</feature>
<feature type="active site" description="For thioesterase activity" evidence="1">
    <location>
        <position position="1897"/>
    </location>
</feature>
<feature type="active site" description="For thioesterase activity" evidence="1">
    <location>
        <position position="2045"/>
    </location>
</feature>
<feature type="modified residue" description="O-(pantetheine 4'-phosphoryl)serine" evidence="3">
    <location>
        <position position="1674"/>
    </location>
</feature>
<dbReference type="EC" id="2.3.1.-" evidence="11 12"/>
<dbReference type="EMBL" id="LC406756">
    <property type="protein sequence ID" value="BBF25315.1"/>
    <property type="molecule type" value="Genomic_DNA"/>
</dbReference>
<dbReference type="SMR" id="A0A455R5P9"/>
<dbReference type="ESTHER" id="acreg-ascc">
    <property type="family name" value="BD-FAE"/>
</dbReference>
<dbReference type="UniPathway" id="UPA00213"/>
<dbReference type="GO" id="GO:0004315">
    <property type="term" value="F:3-oxoacyl-[acyl-carrier-protein] synthase activity"/>
    <property type="evidence" value="ECO:0007669"/>
    <property type="project" value="InterPro"/>
</dbReference>
<dbReference type="GO" id="GO:0004312">
    <property type="term" value="F:fatty acid synthase activity"/>
    <property type="evidence" value="ECO:0007669"/>
    <property type="project" value="TreeGrafter"/>
</dbReference>
<dbReference type="GO" id="GO:0016787">
    <property type="term" value="F:hydrolase activity"/>
    <property type="evidence" value="ECO:0007669"/>
    <property type="project" value="InterPro"/>
</dbReference>
<dbReference type="GO" id="GO:0006633">
    <property type="term" value="P:fatty acid biosynthetic process"/>
    <property type="evidence" value="ECO:0007669"/>
    <property type="project" value="InterPro"/>
</dbReference>
<dbReference type="GO" id="GO:0046189">
    <property type="term" value="P:phenol-containing compound biosynthetic process"/>
    <property type="evidence" value="ECO:0007669"/>
    <property type="project" value="UniProtKB-ARBA"/>
</dbReference>
<dbReference type="GO" id="GO:0030639">
    <property type="term" value="P:polyketide biosynthetic process"/>
    <property type="evidence" value="ECO:0007669"/>
    <property type="project" value="UniProtKB-ARBA"/>
</dbReference>
<dbReference type="GO" id="GO:0016114">
    <property type="term" value="P:terpenoid biosynthetic process"/>
    <property type="evidence" value="ECO:0007669"/>
    <property type="project" value="UniProtKB-UniPathway"/>
</dbReference>
<dbReference type="GO" id="GO:0009403">
    <property type="term" value="P:toxin biosynthetic process"/>
    <property type="evidence" value="ECO:0007669"/>
    <property type="project" value="UniProtKB-ARBA"/>
</dbReference>
<dbReference type="CDD" id="cd00833">
    <property type="entry name" value="PKS"/>
    <property type="match status" value="1"/>
</dbReference>
<dbReference type="Gene3D" id="3.30.70.3290">
    <property type="match status" value="1"/>
</dbReference>
<dbReference type="Gene3D" id="3.40.47.10">
    <property type="match status" value="1"/>
</dbReference>
<dbReference type="Gene3D" id="1.10.1200.10">
    <property type="entry name" value="ACP-like"/>
    <property type="match status" value="1"/>
</dbReference>
<dbReference type="Gene3D" id="3.40.50.1820">
    <property type="entry name" value="alpha/beta hydrolase"/>
    <property type="match status" value="1"/>
</dbReference>
<dbReference type="Gene3D" id="3.40.366.10">
    <property type="entry name" value="Malonyl-Coenzyme A Acyl Carrier Protein, domain 2"/>
    <property type="match status" value="2"/>
</dbReference>
<dbReference type="Gene3D" id="3.10.129.110">
    <property type="entry name" value="Polyketide synthase dehydratase"/>
    <property type="match status" value="1"/>
</dbReference>
<dbReference type="InterPro" id="IPR013094">
    <property type="entry name" value="AB_hydrolase_3"/>
</dbReference>
<dbReference type="InterPro" id="IPR029058">
    <property type="entry name" value="AB_hydrolase_fold"/>
</dbReference>
<dbReference type="InterPro" id="IPR001227">
    <property type="entry name" value="Ac_transferase_dom_sf"/>
</dbReference>
<dbReference type="InterPro" id="IPR036736">
    <property type="entry name" value="ACP-like_sf"/>
</dbReference>
<dbReference type="InterPro" id="IPR014043">
    <property type="entry name" value="Acyl_transferase_dom"/>
</dbReference>
<dbReference type="InterPro" id="IPR016035">
    <property type="entry name" value="Acyl_Trfase/lysoPLipase"/>
</dbReference>
<dbReference type="InterPro" id="IPR018201">
    <property type="entry name" value="Ketoacyl_synth_AS"/>
</dbReference>
<dbReference type="InterPro" id="IPR014031">
    <property type="entry name" value="Ketoacyl_synth_C"/>
</dbReference>
<dbReference type="InterPro" id="IPR014030">
    <property type="entry name" value="Ketoacyl_synth_N"/>
</dbReference>
<dbReference type="InterPro" id="IPR020841">
    <property type="entry name" value="PKS_Beta-ketoAc_synthase_dom"/>
</dbReference>
<dbReference type="InterPro" id="IPR042104">
    <property type="entry name" value="PKS_dehydratase_sf"/>
</dbReference>
<dbReference type="InterPro" id="IPR049551">
    <property type="entry name" value="PKS_DH_C"/>
</dbReference>
<dbReference type="InterPro" id="IPR049900">
    <property type="entry name" value="PKS_mFAS_DH"/>
</dbReference>
<dbReference type="InterPro" id="IPR050091">
    <property type="entry name" value="PKS_NRPS_Biosynth_Enz"/>
</dbReference>
<dbReference type="InterPro" id="IPR009081">
    <property type="entry name" value="PP-bd_ACP"/>
</dbReference>
<dbReference type="InterPro" id="IPR006162">
    <property type="entry name" value="Ppantetheine_attach_site"/>
</dbReference>
<dbReference type="InterPro" id="IPR032088">
    <property type="entry name" value="SAT"/>
</dbReference>
<dbReference type="InterPro" id="IPR016039">
    <property type="entry name" value="Thiolase-like"/>
</dbReference>
<dbReference type="PANTHER" id="PTHR43775">
    <property type="entry name" value="FATTY ACID SYNTHASE"/>
    <property type="match status" value="1"/>
</dbReference>
<dbReference type="PANTHER" id="PTHR43775:SF21">
    <property type="entry name" value="NON-REDUCING POLYKETIDE SYNTHASE AUSA-RELATED"/>
    <property type="match status" value="1"/>
</dbReference>
<dbReference type="Pfam" id="PF07859">
    <property type="entry name" value="Abhydrolase_3"/>
    <property type="match status" value="1"/>
</dbReference>
<dbReference type="Pfam" id="PF00698">
    <property type="entry name" value="Acyl_transf_1"/>
    <property type="match status" value="1"/>
</dbReference>
<dbReference type="Pfam" id="PF22621">
    <property type="entry name" value="CurL-like_PKS_C"/>
    <property type="match status" value="1"/>
</dbReference>
<dbReference type="Pfam" id="PF00109">
    <property type="entry name" value="ketoacyl-synt"/>
    <property type="match status" value="1"/>
</dbReference>
<dbReference type="Pfam" id="PF02801">
    <property type="entry name" value="Ketoacyl-synt_C"/>
    <property type="match status" value="1"/>
</dbReference>
<dbReference type="Pfam" id="PF00550">
    <property type="entry name" value="PP-binding"/>
    <property type="match status" value="1"/>
</dbReference>
<dbReference type="Pfam" id="PF14765">
    <property type="entry name" value="PS-DH"/>
    <property type="match status" value="1"/>
</dbReference>
<dbReference type="Pfam" id="PF16073">
    <property type="entry name" value="SAT"/>
    <property type="match status" value="1"/>
</dbReference>
<dbReference type="SMART" id="SM00827">
    <property type="entry name" value="PKS_AT"/>
    <property type="match status" value="1"/>
</dbReference>
<dbReference type="SMART" id="SM00825">
    <property type="entry name" value="PKS_KS"/>
    <property type="match status" value="1"/>
</dbReference>
<dbReference type="SUPFAM" id="SSF47336">
    <property type="entry name" value="ACP-like"/>
    <property type="match status" value="1"/>
</dbReference>
<dbReference type="SUPFAM" id="SSF53474">
    <property type="entry name" value="alpha/beta-Hydrolases"/>
    <property type="match status" value="1"/>
</dbReference>
<dbReference type="SUPFAM" id="SSF52151">
    <property type="entry name" value="FabD/lysophospholipase-like"/>
    <property type="match status" value="1"/>
</dbReference>
<dbReference type="SUPFAM" id="SSF53901">
    <property type="entry name" value="Thiolase-like"/>
    <property type="match status" value="1"/>
</dbReference>
<dbReference type="PROSITE" id="PS50075">
    <property type="entry name" value="CARRIER"/>
    <property type="match status" value="1"/>
</dbReference>
<dbReference type="PROSITE" id="PS00606">
    <property type="entry name" value="KS3_1"/>
    <property type="match status" value="1"/>
</dbReference>
<dbReference type="PROSITE" id="PS52004">
    <property type="entry name" value="KS3_2"/>
    <property type="match status" value="1"/>
</dbReference>
<dbReference type="PROSITE" id="PS00012">
    <property type="entry name" value="PHOSPHOPANTETHEINE"/>
    <property type="match status" value="1"/>
</dbReference>
<dbReference type="PROSITE" id="PS52019">
    <property type="entry name" value="PKS_MFAS_DH"/>
    <property type="match status" value="1"/>
</dbReference>
<accession>A0A455R5P9</accession>
<sequence length="2115" mass="229487">MTLIQTKHSASAAVFSPQSTAPKPTHLAHIRARLLEDDLLKPVKEAVVSLPKTWRALVSKQPELGKNRKASDLIEAFPSWIEDGKTEVLETDMSGLITLPLLAVIHIVQYLDYIQRLGISHSEFLESVESGGVQGYCIGLLSAIVVSSAEDEEALIQHAAHGIRLSLAIGAFGDIGSSSDEVVSNTLQVRLRNAGSEEDLVARFPGSYISTITDAKTMSIIAPPHLIDALKEHAETEGLRPRAMHIRSNLHNSRNTELAQQCSSLFEDCPFASPDTLQVAVRSNKTGCYLEQDATSLVEEAVSTVLASRCDWSLVMQGLADDLNQSGSKHHSILLFGMGDSVPGAPFREHSLDISKIDVLSLVETPLSATPPASSIDDFPPDSIAIVGSACRLPGANSLDELWDLIAAGRSRLEKVRTDRVNIKESYRASQDPEWTKKREFYGNFIDDVDAFDHAFFNISPREAKYMDPQQRLLLMAAFEAMDSSGYLRSHQRNDGDAVGCFLGASYTEYTENTSAYSPSAFTATSTIRAFLSGKISYHFGWTGPSEVIDTACSASIVAVHRAVQAINAGECPVALAGGVNIITGVNNYFDLGKASFLSQTGQCKPFDDSADGYCRADGVGLVVLKPLSKAVADGDYIQGVIPAIATNQGGIGAPGITVPDGIAQKALYRGILEKAGLKGEDISYVEAHGTGTQVGDPIEIGSIREVFGGAHRASPLHLGSLKANIGHSETAAGVASLLKVLSMVRNRGVPPLQGFKRLNHKIPALELDKMAIPTKLLPWDSDHRIACINSYGASGSNSALICSEWLEEPSKLPDVTGQPLQEYPILLSAASNESLLRYARHLADYITKSSADLTLGNLSYTLSQRRKHHRIRWSTTAKDLIGLIEQLRECTPADFVQAPQKSKKIVLTFSGQSRTTIGVSDSARLENPRFEHYIQQCNNILMSYGCPDLLPYLSQTDPISDPTIIQCGTVTVQYACAQCWIDGGLDVAGIVGHSLGELTALAISGALSLEDTLKVVYTRAEAIKAKWGPESGSMLAIHANQDTVKSIVEIIETMITNPDEALEIACYNSITSHIVVGKESSIEMAEKVIQQDARYHGLRYQRLNTSHGFHSRFTEPLLQDLIHVERSVEFRKPSIPLETSTQTPVDFAKKRHSKYLSNHAREPVFFVDAARRLESRLGECVWLEAGWNTPIVAMTKRAVANPSAHTFQAVTSPAAVAMELWREGIATTYWSFFTPKESGLKHIWLPPYSFDRPKYWLEHVDRAVQERDAAANGSASPPPKKVQQLVTLKKTEGTKSQFRLHTTTERYKRIVSGHAVRSKPLCPASMYMESAIMGTEQLGASLVGKTITFENVSFTKPLGCDENLEVYVNLEQNTAAGEEAWHYAVQSGGKGSHSEGDFFATSGEMADIQLYEMLIADKIEALRNDVDAERLRTATAYSIFSRVVEYSDLLRGISSITMGTRQALAQIKVPKSTFEAQESTVSDFYDAITLDTFIQVLGLLINSDNDSSADDEIYVASSIGKMVVSPTEFKKHATWNVYATYSASDSKASSGAVFVFSEDRKLVSFATKIQFMRIKAAKLEKVLESANPGSKTKSTNGNALPSVPRSVPAGPTSAPQQVAPTTMPSAPAPVPVVAAGASPSKIADLKSLISVYTGVPVDEMQDNQNFGDMGLDSLASMELADEMESKLGLKVETEDLLLGSVGSLIKLLAPSSGPTAALTEGLVESYDTCSESSDSIRNSTGFHTTIPATPAELHSNPPDSLDGSTVWTKPKHSLSARFKLDTMVYKEAEGIDIPADVYVPQEPPQQPMPVALMIHGGGHLTLSRRAVRPTQTKYLLSQGILPVSIDYRLCPQVNVIDGPVADTRDACEWAQRDLPKIMASRNIEVDASKLIVIGWSTGGTLAMTTAWTLPSAGLPPPVAILSFYCPVNYDPEAPIQMGEEHEKRNMSLSEIRRLLGPQPATSHASHTTDTTKLGWVQANDPRSELVLALIKEPRGMSLLFNGLPPTGEELPVPDAERAAALSPLVQVRKGNYDVPTYLIFGDEDEIAPFGKAVEFAQALKDAGVKSGFLPIKGGKHIFDLGISPGSKAWDESIGPGYDFLLGELENAHRRCRDV</sequence>
<organism>
    <name type="scientific">Acremonium egyptiacum</name>
    <name type="common">Oospora egyptiaca</name>
    <dbReference type="NCBI Taxonomy" id="749675"/>
    <lineage>
        <taxon>Eukaryota</taxon>
        <taxon>Fungi</taxon>
        <taxon>Dikarya</taxon>
        <taxon>Ascomycota</taxon>
        <taxon>Pezizomycotina</taxon>
        <taxon>Sordariomycetes</taxon>
        <taxon>Hypocreomycetidae</taxon>
        <taxon>Hypocreales</taxon>
        <taxon>Hypocreales incertae sedis</taxon>
        <taxon>Acremonium</taxon>
    </lineage>
</organism>
<evidence type="ECO:0000250" key="1">
    <source>
        <dbReference type="UniProtKB" id="Q5ATJ7"/>
    </source>
</evidence>
<evidence type="ECO:0000255" key="2"/>
<evidence type="ECO:0000255" key="3">
    <source>
        <dbReference type="PROSITE-ProRule" id="PRU00258"/>
    </source>
</evidence>
<evidence type="ECO:0000255" key="4">
    <source>
        <dbReference type="PROSITE-ProRule" id="PRU01348"/>
    </source>
</evidence>
<evidence type="ECO:0000255" key="5">
    <source>
        <dbReference type="PROSITE-ProRule" id="PRU01363"/>
    </source>
</evidence>
<evidence type="ECO:0000255" key="6">
    <source>
        <dbReference type="PROSITE-ProRule" id="PRU10022"/>
    </source>
</evidence>
<evidence type="ECO:0000256" key="7">
    <source>
        <dbReference type="SAM" id="MobiDB-lite"/>
    </source>
</evidence>
<evidence type="ECO:0000269" key="8">
    <source>
    </source>
</evidence>
<evidence type="ECO:0000269" key="9">
    <source>
    </source>
</evidence>
<evidence type="ECO:0000269" key="10">
    <source>
    </source>
</evidence>
<evidence type="ECO:0000269" key="11">
    <source>
    </source>
</evidence>
<evidence type="ECO:0000269" key="12">
    <source>
    </source>
</evidence>
<evidence type="ECO:0000303" key="13">
    <source>
    </source>
</evidence>
<evidence type="ECO:0000305" key="14">
    <source>
    </source>
</evidence>
<gene>
    <name evidence="13" type="primary">ascC</name>
</gene>
<proteinExistence type="evidence at protein level"/>
<reference key="1">
    <citation type="journal article" date="2019" name="Proc. Natl. Acad. Sci. U.S.A.">
        <title>Complete biosynthetic pathways of ascofuranone and ascochlorin in Acremonium egyptiacum.</title>
        <authorList>
            <person name="Araki Y."/>
            <person name="Awakawa T."/>
            <person name="Matsuzaki M."/>
            <person name="Cho R."/>
            <person name="Matsuda Y."/>
            <person name="Hoshino S."/>
            <person name="Shinohara Y."/>
            <person name="Yamamoto M."/>
            <person name="Kido Y."/>
            <person name="Inaoka D.K."/>
            <person name="Nagamune K."/>
            <person name="Ito K."/>
            <person name="Abe I."/>
            <person name="Kita K."/>
        </authorList>
    </citation>
    <scope>NUCLEOTIDE SEQUENCE [GENOMIC DNA]</scope>
    <scope>FUNCTION</scope>
    <scope>CATALYTIC ACTIVITY</scope>
    <scope>INDUCTION</scope>
    <scope>PATHWAY</scope>
    <source>
        <strain>F-1392</strain>
    </source>
</reference>
<reference key="2">
    <citation type="journal article" date="2002" name="Biochim. Biophys. Acta">
        <title>Trypanosome alternative oxidase as a target of chemotherapy.</title>
        <authorList>
            <person name="Nihei C."/>
            <person name="Fukai Y."/>
            <person name="Kita K."/>
        </authorList>
    </citation>
    <scope>BIOTECHNOLOGY</scope>
</reference>
<reference key="3">
    <citation type="journal article" date="2003" name="Parasitol. Int.">
        <title>The efficacy of ascofuranone in a consecutive treatment on Trypanosoma brucei brucei in mice.</title>
        <authorList>
            <person name="Yabu Y."/>
            <person name="Yoshida A."/>
            <person name="Suzuki T."/>
            <person name="Nihei C."/>
            <person name="Kawai K."/>
            <person name="Minagawa N."/>
            <person name="Hosokawa T."/>
            <person name="Nagai K."/>
            <person name="Kita K."/>
            <person name="Ohta N."/>
        </authorList>
    </citation>
    <scope>BIOTECHNOLOGY</scope>
</reference>
<reference key="4">
    <citation type="journal article" date="2010" name="Parasitol. Int.">
        <title>Trypanosome alternative oxidase, a potential therapeutic target for sleeping sickness, is conserved among Trypanosoma brucei subspecies.</title>
        <authorList>
            <person name="Nakamura K."/>
            <person name="Fujioka S."/>
            <person name="Fukumoto S."/>
            <person name="Inoue N."/>
            <person name="Sakamoto K."/>
            <person name="Hirata H."/>
            <person name="Kido Y."/>
            <person name="Yabu Y."/>
            <person name="Suzuki T."/>
            <person name="Watanabe Y."/>
            <person name="Saimoto H."/>
            <person name="Akiyama H."/>
            <person name="Kita K."/>
        </authorList>
    </citation>
    <scope>BIOTECHNOLOGY</scope>
</reference>
<reference key="5">
    <citation type="journal article" date="2022" name="J. Gen. Appl. Microbiol.">
        <title>Heterologous production of ascofuranone and ilicicolin A in Aspergillus sojae.</title>
        <authorList>
            <person name="Araki Y."/>
            <person name="Shinohara Y."/>
            <person name="Hara S."/>
            <person name="Sato A."/>
            <person name="Sakaue R."/>
            <person name="Gomi K."/>
            <person name="Kita K."/>
            <person name="Ito K."/>
        </authorList>
    </citation>
    <scope>FUNCTION</scope>
    <scope>CATALYTIC ACTIVITY</scope>
    <scope>PATHWAY</scope>
</reference>